<comment type="function">
    <text evidence="1">In the nervous system, could hydrolyze ATP and other nucleotides to regulate purinergic neurotransmission. Hydrolyzes ADP only to a marginal extent (By similarity).</text>
</comment>
<comment type="cofactor">
    <cofactor>
        <name>Ca(2+)</name>
        <dbReference type="ChEBI" id="CHEBI:29108"/>
    </cofactor>
    <cofactor>
        <name>Mg(2+)</name>
        <dbReference type="ChEBI" id="CHEBI:18420"/>
    </cofactor>
</comment>
<comment type="subcellular location">
    <molecule>Isoform Long</molecule>
    <subcellularLocation>
        <location evidence="1">Cell membrane</location>
        <topology evidence="1">Multi-pass membrane protein</topology>
    </subcellularLocation>
</comment>
<comment type="alternative products">
    <event type="alternative splicing"/>
    <isoform>
        <id>O55026-1</id>
        <name>Long</name>
        <sequence type="displayed"/>
    </isoform>
    <isoform>
        <id>O55026-2</id>
        <name>Short</name>
        <sequence type="described" ref="VSP_003611 VSP_003612"/>
    </isoform>
</comment>
<comment type="induction">
    <text>By dioxin.</text>
</comment>
<comment type="similarity">
    <text evidence="6">Belongs to the GDA1/CD39 NTPase family.</text>
</comment>
<proteinExistence type="evidence at protein level"/>
<reference key="1">
    <citation type="journal article" date="1997" name="Mamm. Genome">
        <title>Cloning and mapping of a human and mouse gene with homology to ecto-ATPase genes.</title>
        <authorList>
            <person name="Chadwick B.P."/>
            <person name="Frischauf A.-M."/>
        </authorList>
    </citation>
    <scope>NUCLEOTIDE SEQUENCE [MRNA] (ISOFORM SHORT)</scope>
    <source>
        <tissue>Embryo</tissue>
    </source>
</reference>
<reference key="2">
    <citation type="journal article" date="1998" name="J. Biol. Chem.">
        <title>A novel response to dioxin. Induction of ecto-ATPase gene expression.</title>
        <authorList>
            <person name="Gao L."/>
            <person name="Dong L."/>
            <person name="Whitlock J.P. Jr."/>
        </authorList>
    </citation>
    <scope>NUCLEOTIDE SEQUENCE [MRNA] (ISOFORM LONG)</scope>
    <source>
        <tissue>Hepatoma</tissue>
    </source>
</reference>
<reference key="3">
    <citation type="submission" date="2003-08" db="EMBL/GenBank/DDBJ databases">
        <title>Cloning of mouse heart nucleoside triphosphate diphosphohydrolase-2.</title>
        <authorList>
            <person name="Lavoie E.G."/>
            <person name="Lecka J."/>
            <person name="Sevigny J."/>
        </authorList>
    </citation>
    <scope>NUCLEOTIDE SEQUENCE [MRNA] (ISOFORM LONG)</scope>
    <source>
        <strain>CD-1</strain>
        <tissue>Heart</tissue>
    </source>
</reference>
<reference key="4">
    <citation type="journal article" date="2005" name="Science">
        <title>The transcriptional landscape of the mammalian genome.</title>
        <authorList>
            <person name="Carninci P."/>
            <person name="Kasukawa T."/>
            <person name="Katayama S."/>
            <person name="Gough J."/>
            <person name="Frith M.C."/>
            <person name="Maeda N."/>
            <person name="Oyama R."/>
            <person name="Ravasi T."/>
            <person name="Lenhard B."/>
            <person name="Wells C."/>
            <person name="Kodzius R."/>
            <person name="Shimokawa K."/>
            <person name="Bajic V.B."/>
            <person name="Brenner S.E."/>
            <person name="Batalov S."/>
            <person name="Forrest A.R."/>
            <person name="Zavolan M."/>
            <person name="Davis M.J."/>
            <person name="Wilming L.G."/>
            <person name="Aidinis V."/>
            <person name="Allen J.E."/>
            <person name="Ambesi-Impiombato A."/>
            <person name="Apweiler R."/>
            <person name="Aturaliya R.N."/>
            <person name="Bailey T.L."/>
            <person name="Bansal M."/>
            <person name="Baxter L."/>
            <person name="Beisel K.W."/>
            <person name="Bersano T."/>
            <person name="Bono H."/>
            <person name="Chalk A.M."/>
            <person name="Chiu K.P."/>
            <person name="Choudhary V."/>
            <person name="Christoffels A."/>
            <person name="Clutterbuck D.R."/>
            <person name="Crowe M.L."/>
            <person name="Dalla E."/>
            <person name="Dalrymple B.P."/>
            <person name="de Bono B."/>
            <person name="Della Gatta G."/>
            <person name="di Bernardo D."/>
            <person name="Down T."/>
            <person name="Engstrom P."/>
            <person name="Fagiolini M."/>
            <person name="Faulkner G."/>
            <person name="Fletcher C.F."/>
            <person name="Fukushima T."/>
            <person name="Furuno M."/>
            <person name="Futaki S."/>
            <person name="Gariboldi M."/>
            <person name="Georgii-Hemming P."/>
            <person name="Gingeras T.R."/>
            <person name="Gojobori T."/>
            <person name="Green R.E."/>
            <person name="Gustincich S."/>
            <person name="Harbers M."/>
            <person name="Hayashi Y."/>
            <person name="Hensch T.K."/>
            <person name="Hirokawa N."/>
            <person name="Hill D."/>
            <person name="Huminiecki L."/>
            <person name="Iacono M."/>
            <person name="Ikeo K."/>
            <person name="Iwama A."/>
            <person name="Ishikawa T."/>
            <person name="Jakt M."/>
            <person name="Kanapin A."/>
            <person name="Katoh M."/>
            <person name="Kawasawa Y."/>
            <person name="Kelso J."/>
            <person name="Kitamura H."/>
            <person name="Kitano H."/>
            <person name="Kollias G."/>
            <person name="Krishnan S.P."/>
            <person name="Kruger A."/>
            <person name="Kummerfeld S.K."/>
            <person name="Kurochkin I.V."/>
            <person name="Lareau L.F."/>
            <person name="Lazarevic D."/>
            <person name="Lipovich L."/>
            <person name="Liu J."/>
            <person name="Liuni S."/>
            <person name="McWilliam S."/>
            <person name="Madan Babu M."/>
            <person name="Madera M."/>
            <person name="Marchionni L."/>
            <person name="Matsuda H."/>
            <person name="Matsuzawa S."/>
            <person name="Miki H."/>
            <person name="Mignone F."/>
            <person name="Miyake S."/>
            <person name="Morris K."/>
            <person name="Mottagui-Tabar S."/>
            <person name="Mulder N."/>
            <person name="Nakano N."/>
            <person name="Nakauchi H."/>
            <person name="Ng P."/>
            <person name="Nilsson R."/>
            <person name="Nishiguchi S."/>
            <person name="Nishikawa S."/>
            <person name="Nori F."/>
            <person name="Ohara O."/>
            <person name="Okazaki Y."/>
            <person name="Orlando V."/>
            <person name="Pang K.C."/>
            <person name="Pavan W.J."/>
            <person name="Pavesi G."/>
            <person name="Pesole G."/>
            <person name="Petrovsky N."/>
            <person name="Piazza S."/>
            <person name="Reed J."/>
            <person name="Reid J.F."/>
            <person name="Ring B.Z."/>
            <person name="Ringwald M."/>
            <person name="Rost B."/>
            <person name="Ruan Y."/>
            <person name="Salzberg S.L."/>
            <person name="Sandelin A."/>
            <person name="Schneider C."/>
            <person name="Schoenbach C."/>
            <person name="Sekiguchi K."/>
            <person name="Semple C.A."/>
            <person name="Seno S."/>
            <person name="Sessa L."/>
            <person name="Sheng Y."/>
            <person name="Shibata Y."/>
            <person name="Shimada H."/>
            <person name="Shimada K."/>
            <person name="Silva D."/>
            <person name="Sinclair B."/>
            <person name="Sperling S."/>
            <person name="Stupka E."/>
            <person name="Sugiura K."/>
            <person name="Sultana R."/>
            <person name="Takenaka Y."/>
            <person name="Taki K."/>
            <person name="Tammoja K."/>
            <person name="Tan S.L."/>
            <person name="Tang S."/>
            <person name="Taylor M.S."/>
            <person name="Tegner J."/>
            <person name="Teichmann S.A."/>
            <person name="Ueda H.R."/>
            <person name="van Nimwegen E."/>
            <person name="Verardo R."/>
            <person name="Wei C.L."/>
            <person name="Yagi K."/>
            <person name="Yamanishi H."/>
            <person name="Zabarovsky E."/>
            <person name="Zhu S."/>
            <person name="Zimmer A."/>
            <person name="Hide W."/>
            <person name="Bult C."/>
            <person name="Grimmond S.M."/>
            <person name="Teasdale R.D."/>
            <person name="Liu E.T."/>
            <person name="Brusic V."/>
            <person name="Quackenbush J."/>
            <person name="Wahlestedt C."/>
            <person name="Mattick J.S."/>
            <person name="Hume D.A."/>
            <person name="Kai C."/>
            <person name="Sasaki D."/>
            <person name="Tomaru Y."/>
            <person name="Fukuda S."/>
            <person name="Kanamori-Katayama M."/>
            <person name="Suzuki M."/>
            <person name="Aoki J."/>
            <person name="Arakawa T."/>
            <person name="Iida J."/>
            <person name="Imamura K."/>
            <person name="Itoh M."/>
            <person name="Kato T."/>
            <person name="Kawaji H."/>
            <person name="Kawagashira N."/>
            <person name="Kawashima T."/>
            <person name="Kojima M."/>
            <person name="Kondo S."/>
            <person name="Konno H."/>
            <person name="Nakano K."/>
            <person name="Ninomiya N."/>
            <person name="Nishio T."/>
            <person name="Okada M."/>
            <person name="Plessy C."/>
            <person name="Shibata K."/>
            <person name="Shiraki T."/>
            <person name="Suzuki S."/>
            <person name="Tagami M."/>
            <person name="Waki K."/>
            <person name="Watahiki A."/>
            <person name="Okamura-Oho Y."/>
            <person name="Suzuki H."/>
            <person name="Kawai J."/>
            <person name="Hayashizaki Y."/>
        </authorList>
    </citation>
    <scope>NUCLEOTIDE SEQUENCE [LARGE SCALE MRNA] (ISOFORM LONG)</scope>
    <source>
        <strain>C57BL/6J</strain>
        <tissue>Kidney</tissue>
    </source>
</reference>
<reference key="5">
    <citation type="journal article" date="2009" name="Nat. Biotechnol.">
        <title>Mass-spectrometric identification and relative quantification of N-linked cell surface glycoproteins.</title>
        <authorList>
            <person name="Wollscheid B."/>
            <person name="Bausch-Fluck D."/>
            <person name="Henderson C."/>
            <person name="O'Brien R."/>
            <person name="Bibel M."/>
            <person name="Schiess R."/>
            <person name="Aebersold R."/>
            <person name="Watts J.D."/>
        </authorList>
    </citation>
    <scope>GLYCOSYLATION [LARGE SCALE ANALYSIS] AT ASN-129</scope>
</reference>
<reference key="6">
    <citation type="journal article" date="2010" name="Cell">
        <title>A tissue-specific atlas of mouse protein phosphorylation and expression.</title>
        <authorList>
            <person name="Huttlin E.L."/>
            <person name="Jedrychowski M.P."/>
            <person name="Elias J.E."/>
            <person name="Goswami T."/>
            <person name="Rad R."/>
            <person name="Beausoleil S.A."/>
            <person name="Villen J."/>
            <person name="Haas W."/>
            <person name="Sowa M.E."/>
            <person name="Gygi S.P."/>
        </authorList>
    </citation>
    <scope>IDENTIFICATION BY MASS SPECTROMETRY [LARGE SCALE ANALYSIS]</scope>
    <source>
        <tissue>Brain</tissue>
        <tissue>Heart</tissue>
        <tissue>Lung</tissue>
        <tissue>Pancreas</tissue>
        <tissue>Testis</tissue>
    </source>
</reference>
<feature type="chain" id="PRO_0000209907" description="Ectonucleoside triphosphate diphosphohydrolase 2">
    <location>
        <begin position="1"/>
        <end position="495"/>
    </location>
</feature>
<feature type="topological domain" description="Cytoplasmic" evidence="3">
    <location>
        <begin position="1"/>
        <end position="4"/>
    </location>
</feature>
<feature type="transmembrane region" description="Helical" evidence="3">
    <location>
        <begin position="5"/>
        <end position="25"/>
    </location>
</feature>
<feature type="topological domain" description="Extracellular" evidence="3">
    <location>
        <begin position="26"/>
        <end position="462"/>
    </location>
</feature>
<feature type="transmembrane region" description="Helical" evidence="3">
    <location>
        <begin position="463"/>
        <end position="483"/>
    </location>
</feature>
<feature type="topological domain" description="Cytoplasmic" evidence="3">
    <location>
        <begin position="484"/>
        <end position="495"/>
    </location>
</feature>
<feature type="active site" description="Proton acceptor" evidence="2">
    <location>
        <position position="165"/>
    </location>
</feature>
<feature type="binding site" evidence="2">
    <location>
        <begin position="204"/>
        <end position="208"/>
    </location>
    <ligand>
        <name>ATP</name>
        <dbReference type="ChEBI" id="CHEBI:30616"/>
    </ligand>
</feature>
<feature type="glycosylation site" description="N-linked (GlcNAc...) asparagine" evidence="3">
    <location>
        <position position="64"/>
    </location>
</feature>
<feature type="glycosylation site" description="N-linked (GlcNAc...) asparagine" evidence="4">
    <location>
        <position position="129"/>
    </location>
</feature>
<feature type="glycosylation site" description="N-linked (GlcNAc...) asparagine" evidence="3">
    <location>
        <position position="294"/>
    </location>
</feature>
<feature type="glycosylation site" description="N-linked (GlcNAc...) asparagine" evidence="3">
    <location>
        <position position="319"/>
    </location>
</feature>
<feature type="glycosylation site" description="N-linked (GlcNAc...) asparagine" evidence="3">
    <location>
        <position position="378"/>
    </location>
</feature>
<feature type="glycosylation site" description="N-linked (GlcNAc...) asparagine" evidence="3">
    <location>
        <position position="443"/>
    </location>
</feature>
<feature type="disulfide bond" evidence="2">
    <location>
        <begin position="75"/>
        <end position="99"/>
    </location>
</feature>
<feature type="disulfide bond" evidence="2">
    <location>
        <begin position="242"/>
        <end position="284"/>
    </location>
</feature>
<feature type="disulfide bond" evidence="2">
    <location>
        <begin position="265"/>
        <end position="310"/>
    </location>
</feature>
<feature type="disulfide bond" evidence="2">
    <location>
        <begin position="323"/>
        <end position="328"/>
    </location>
</feature>
<feature type="disulfide bond" evidence="2">
    <location>
        <begin position="377"/>
        <end position="399"/>
    </location>
</feature>
<feature type="splice variant" id="VSP_003611" description="In isoform Short." evidence="5">
    <original>LTS</original>
    <variation>MAG</variation>
    <location>
        <begin position="130"/>
        <end position="132"/>
    </location>
</feature>
<feature type="splice variant" id="VSP_003612" description="In isoform Short." evidence="5">
    <location>
        <begin position="133"/>
        <end position="495"/>
    </location>
</feature>
<feature type="sequence conflict" description="In Ref. 2; AAC24347." evidence="6" ref="2">
    <original>A</original>
    <variation>T</variation>
    <location>
        <position position="400"/>
    </location>
</feature>
<feature type="sequence conflict" description="In Ref. 2; AAC24347." evidence="6" ref="2">
    <original>R</original>
    <variation>S</variation>
    <location>
        <position position="414"/>
    </location>
</feature>
<feature type="sequence conflict" description="In Ref. 2; AAC24347." evidence="6" ref="2">
    <original>A</original>
    <variation>T</variation>
    <location>
        <position position="437"/>
    </location>
</feature>
<evidence type="ECO:0000250" key="1"/>
<evidence type="ECO:0000250" key="2">
    <source>
        <dbReference type="UniProtKB" id="O35795"/>
    </source>
</evidence>
<evidence type="ECO:0000255" key="3"/>
<evidence type="ECO:0000269" key="4">
    <source>
    </source>
</evidence>
<evidence type="ECO:0000303" key="5">
    <source>
    </source>
</evidence>
<evidence type="ECO:0000305" key="6"/>
<keyword id="KW-0025">Alternative splicing</keyword>
<keyword id="KW-0067">ATP-binding</keyword>
<keyword id="KW-0106">Calcium</keyword>
<keyword id="KW-1003">Cell membrane</keyword>
<keyword id="KW-1015">Disulfide bond</keyword>
<keyword id="KW-0325">Glycoprotein</keyword>
<keyword id="KW-0378">Hydrolase</keyword>
<keyword id="KW-0460">Magnesium</keyword>
<keyword id="KW-0472">Membrane</keyword>
<keyword id="KW-0547">Nucleotide-binding</keyword>
<keyword id="KW-1185">Reference proteome</keyword>
<keyword id="KW-0812">Transmembrane</keyword>
<keyword id="KW-1133">Transmembrane helix</keyword>
<gene>
    <name type="primary">Entpd2</name>
    <name type="synonym">Cd39l1</name>
</gene>
<accession>O55026</accession>
<accession>O35928</accession>
<accession>Q9DCR9</accession>
<sequence>MAGKLVSLVPPLLLAAVGLAGLLLLCVPTQDVREPPALKYGIVLDAGSSHTSMFVYKWPADKENDTGIVGQHSSCDVRGGGISSYANDPSRAGQSLVECLEQALRDVPKDRYASTPLYLGATAGMRLLNLTSPEATAKVLEAVTQTLTRYPFDFRGARILSGQDEGVFGWVTANYLLENFIKYGWVGRWIRPRKGTLGAMDLGGASTQITFETTSPSEDPDNEVHLRLYGQHYRVYTHSFLCYGRDQVLQRLLASALQIHRFHPCWPKGYSTQVLLREVYQSPCTMGQRPQTFNSSATVSLSGTSNAALCRDLVSGLFNISSCPFSQCSFNGVFQPPVAGNFIAFSAFYYTVDFLKTVMGLPVGTLKQLEDATETTCNQTWAELQARVPGQQTRLPDYCAVAMFIHQLLSRGYRFDERSFRGVVFEKKAADTAVGWALGYMLNLTNLIPADLPGLRKGTHFSSWVALLLLFTVLILAALVLLLRQVRSAKSPGAL</sequence>
<organism>
    <name type="scientific">Mus musculus</name>
    <name type="common">Mouse</name>
    <dbReference type="NCBI Taxonomy" id="10090"/>
    <lineage>
        <taxon>Eukaryota</taxon>
        <taxon>Metazoa</taxon>
        <taxon>Chordata</taxon>
        <taxon>Craniata</taxon>
        <taxon>Vertebrata</taxon>
        <taxon>Euteleostomi</taxon>
        <taxon>Mammalia</taxon>
        <taxon>Eutheria</taxon>
        <taxon>Euarchontoglires</taxon>
        <taxon>Glires</taxon>
        <taxon>Rodentia</taxon>
        <taxon>Myomorpha</taxon>
        <taxon>Muroidea</taxon>
        <taxon>Muridae</taxon>
        <taxon>Murinae</taxon>
        <taxon>Mus</taxon>
        <taxon>Mus</taxon>
    </lineage>
</organism>
<protein>
    <recommendedName>
        <fullName>Ectonucleoside triphosphate diphosphohydrolase 2</fullName>
        <shortName>NTPDase 2</shortName>
        <ecNumber>3.6.1.-</ecNumber>
    </recommendedName>
    <alternativeName>
        <fullName>CD39 antigen-like 1</fullName>
    </alternativeName>
    <alternativeName>
        <fullName>Ecto-ATP diphosphohydrolase 2</fullName>
        <shortName>Ecto-ATPDase 2</shortName>
        <shortName>Ecto-ATPase 2</shortName>
    </alternativeName>
</protein>
<dbReference type="EC" id="3.6.1.-"/>
<dbReference type="EMBL" id="U91511">
    <property type="protein sequence ID" value="AAB81014.1"/>
    <property type="molecule type" value="mRNA"/>
</dbReference>
<dbReference type="EMBL" id="AF042811">
    <property type="protein sequence ID" value="AAC24347.1"/>
    <property type="molecule type" value="mRNA"/>
</dbReference>
<dbReference type="EMBL" id="AY376711">
    <property type="protein sequence ID" value="AAQ86586.1"/>
    <property type="molecule type" value="mRNA"/>
</dbReference>
<dbReference type="EMBL" id="AK002553">
    <property type="protein sequence ID" value="BAB22182.1"/>
    <property type="molecule type" value="mRNA"/>
</dbReference>
<dbReference type="CCDS" id="CCDS15770.1">
    <molecule id="O55026-1"/>
</dbReference>
<dbReference type="RefSeq" id="NP_033979.2">
    <molecule id="O55026-1"/>
    <property type="nucleotide sequence ID" value="NM_009849.2"/>
</dbReference>
<dbReference type="SMR" id="O55026"/>
<dbReference type="BioGRID" id="198592">
    <property type="interactions" value="1"/>
</dbReference>
<dbReference type="FunCoup" id="O55026">
    <property type="interactions" value="258"/>
</dbReference>
<dbReference type="IntAct" id="O55026">
    <property type="interactions" value="1"/>
</dbReference>
<dbReference type="MINT" id="O55026"/>
<dbReference type="STRING" id="10090.ENSMUSP00000028328"/>
<dbReference type="GlyConnect" id="2273">
    <property type="glycosylation" value="13 N-Linked glycans (3 sites)"/>
</dbReference>
<dbReference type="GlyCosmos" id="O55026">
    <property type="glycosylation" value="6 sites, 13 glycans"/>
</dbReference>
<dbReference type="GlyGen" id="O55026">
    <property type="glycosylation" value="7 sites, 15 N-linked glycans (5 sites), 1 O-linked glycan (1 site)"/>
</dbReference>
<dbReference type="iPTMnet" id="O55026"/>
<dbReference type="PhosphoSitePlus" id="O55026"/>
<dbReference type="SwissPalm" id="O55026"/>
<dbReference type="PaxDb" id="10090-ENSMUSP00000028328"/>
<dbReference type="PeptideAtlas" id="O55026"/>
<dbReference type="ProteomicsDB" id="275917">
    <molecule id="O55026-1"/>
</dbReference>
<dbReference type="ProteomicsDB" id="275918">
    <molecule id="O55026-2"/>
</dbReference>
<dbReference type="Antibodypedia" id="2981">
    <property type="antibodies" value="216 antibodies from 33 providers"/>
</dbReference>
<dbReference type="DNASU" id="12496"/>
<dbReference type="Ensembl" id="ENSMUST00000028328.3">
    <molecule id="O55026-1"/>
    <property type="protein sequence ID" value="ENSMUSP00000028328.3"/>
    <property type="gene ID" value="ENSMUSG00000015085.9"/>
</dbReference>
<dbReference type="GeneID" id="12496"/>
<dbReference type="KEGG" id="mmu:12496"/>
<dbReference type="UCSC" id="uc008irw.2">
    <molecule id="O55026-1"/>
    <property type="organism name" value="mouse"/>
</dbReference>
<dbReference type="AGR" id="MGI:1096863"/>
<dbReference type="CTD" id="954"/>
<dbReference type="MGI" id="MGI:1096863">
    <property type="gene designation" value="Entpd2"/>
</dbReference>
<dbReference type="VEuPathDB" id="HostDB:ENSMUSG00000015085"/>
<dbReference type="eggNOG" id="KOG1386">
    <property type="taxonomic scope" value="Eukaryota"/>
</dbReference>
<dbReference type="GeneTree" id="ENSGT01110000267162"/>
<dbReference type="HOGENOM" id="CLU_010246_2_3_1"/>
<dbReference type="InParanoid" id="O55026"/>
<dbReference type="OMA" id="NEECRYQ"/>
<dbReference type="OrthoDB" id="6372431at2759"/>
<dbReference type="PhylomeDB" id="O55026"/>
<dbReference type="TreeFam" id="TF332859"/>
<dbReference type="BRENDA" id="3.6.1.5">
    <property type="organism ID" value="3474"/>
</dbReference>
<dbReference type="Reactome" id="R-MMU-8850843">
    <property type="pathway name" value="Phosphate bond hydrolysis by NTPDase proteins"/>
</dbReference>
<dbReference type="SABIO-RK" id="O55026"/>
<dbReference type="BioGRID-ORCS" id="12496">
    <property type="hits" value="1 hit in 79 CRISPR screens"/>
</dbReference>
<dbReference type="ChiTaRS" id="Entpd2">
    <property type="organism name" value="mouse"/>
</dbReference>
<dbReference type="PRO" id="PR:O55026"/>
<dbReference type="Proteomes" id="UP000000589">
    <property type="component" value="Chromosome 2"/>
</dbReference>
<dbReference type="RNAct" id="O55026">
    <property type="molecule type" value="protein"/>
</dbReference>
<dbReference type="Bgee" id="ENSMUSG00000015085">
    <property type="expression patterns" value="Expressed in seminal vesicle and 200 other cell types or tissues"/>
</dbReference>
<dbReference type="ExpressionAtlas" id="O55026">
    <property type="expression patterns" value="baseline and differential"/>
</dbReference>
<dbReference type="GO" id="GO:0005604">
    <property type="term" value="C:basement membrane"/>
    <property type="evidence" value="ECO:0000314"/>
    <property type="project" value="MGI"/>
</dbReference>
<dbReference type="GO" id="GO:0005886">
    <property type="term" value="C:plasma membrane"/>
    <property type="evidence" value="ECO:0000314"/>
    <property type="project" value="MGI"/>
</dbReference>
<dbReference type="GO" id="GO:0005524">
    <property type="term" value="F:ATP binding"/>
    <property type="evidence" value="ECO:0007669"/>
    <property type="project" value="UniProtKB-KW"/>
</dbReference>
<dbReference type="GO" id="GO:0017110">
    <property type="term" value="F:nucleoside diphosphate phosphatase activity"/>
    <property type="evidence" value="ECO:0000314"/>
    <property type="project" value="MGI"/>
</dbReference>
<dbReference type="GO" id="GO:0017111">
    <property type="term" value="F:ribonucleoside triphosphate phosphatase activity"/>
    <property type="evidence" value="ECO:0000314"/>
    <property type="project" value="MGI"/>
</dbReference>
<dbReference type="GO" id="GO:0007186">
    <property type="term" value="P:G protein-coupled receptor signaling pathway"/>
    <property type="evidence" value="ECO:0000314"/>
    <property type="project" value="MGI"/>
</dbReference>
<dbReference type="GO" id="GO:0030168">
    <property type="term" value="P:platelet activation"/>
    <property type="evidence" value="ECO:0000314"/>
    <property type="project" value="MGI"/>
</dbReference>
<dbReference type="GO" id="GO:0009181">
    <property type="term" value="P:purine ribonucleoside diphosphate catabolic process"/>
    <property type="evidence" value="ECO:0000314"/>
    <property type="project" value="MGI"/>
</dbReference>
<dbReference type="CDD" id="cd24111">
    <property type="entry name" value="ASKHA_NBD_NTPDase2"/>
    <property type="match status" value="1"/>
</dbReference>
<dbReference type="FunFam" id="3.30.420.150:FF:000002">
    <property type="entry name" value="Ectonucleoside triphosphate diphosphohydrolase 1"/>
    <property type="match status" value="1"/>
</dbReference>
<dbReference type="FunFam" id="3.30.420.40:FF:000068">
    <property type="entry name" value="Ectonucleoside triphosphate diphosphohydrolase 1"/>
    <property type="match status" value="1"/>
</dbReference>
<dbReference type="Gene3D" id="3.30.420.40">
    <property type="match status" value="1"/>
</dbReference>
<dbReference type="Gene3D" id="3.30.420.150">
    <property type="entry name" value="Exopolyphosphatase. Domain 2"/>
    <property type="match status" value="1"/>
</dbReference>
<dbReference type="InterPro" id="IPR000407">
    <property type="entry name" value="GDA1_CD39_NTPase"/>
</dbReference>
<dbReference type="PANTHER" id="PTHR11782">
    <property type="entry name" value="ADENOSINE/GUANOSINE DIPHOSPHATASE"/>
    <property type="match status" value="1"/>
</dbReference>
<dbReference type="PANTHER" id="PTHR11782:SF33">
    <property type="entry name" value="ECTONUCLEOSIDE TRIPHOSPHATE DIPHOSPHOHYDROLASE 2"/>
    <property type="match status" value="1"/>
</dbReference>
<dbReference type="Pfam" id="PF01150">
    <property type="entry name" value="GDA1_CD39"/>
    <property type="match status" value="1"/>
</dbReference>
<dbReference type="PROSITE" id="PS01238">
    <property type="entry name" value="GDA1_CD39_NTPASE"/>
    <property type="match status" value="1"/>
</dbReference>
<name>ENTP2_MOUSE</name>